<protein>
    <recommendedName>
        <fullName>Uncharacterized N-acetyltransferase ycf52</fullName>
        <ecNumber>2.3.1.-</ecNumber>
    </recommendedName>
</protein>
<keyword id="KW-0012">Acyltransferase</keyword>
<keyword id="KW-0150">Chloroplast</keyword>
<keyword id="KW-0934">Plastid</keyword>
<keyword id="KW-0808">Transferase</keyword>
<gene>
    <name type="primary">ycf52</name>
</gene>
<proteinExistence type="inferred from homology"/>
<feature type="chain" id="PRO_0000074605" description="Uncharacterized N-acetyltransferase ycf52">
    <location>
        <begin position="1"/>
        <end position="174"/>
    </location>
</feature>
<feature type="domain" description="N-acetyltransferase" evidence="1">
    <location>
        <begin position="42"/>
        <end position="174"/>
    </location>
</feature>
<reference key="1">
    <citation type="journal article" date="1995" name="Plant Mol. Biol. Rep.">
        <title>Complete nucleotide sequence of the Porphyra purpurea chloroplast genome.</title>
        <authorList>
            <person name="Reith M.E."/>
            <person name="Munholland J."/>
        </authorList>
    </citation>
    <scope>NUCLEOTIDE SEQUENCE [LARGE SCALE GENOMIC DNA]</scope>
    <source>
        <strain>Avonport</strain>
    </source>
</reference>
<sequence length="174" mass="20099">MIFWKTFFQNSTVGESYENNFKKLFLLDKTFDKIELKDVYLSNTKNINLYELEQLCDSVGWVKRPLKKVKIALKHSSIIISLIQKNDSSTRLVGFARATSDNGFNATIWDVVIHPDFQGLGLGKVVMHQLIKQLRQAEISTITLFAEPDVISFYRKLGFIKDPDGVKGMFWYPR</sequence>
<organism>
    <name type="scientific">Porphyra purpurea</name>
    <name type="common">Red seaweed</name>
    <name type="synonym">Ulva purpurea</name>
    <dbReference type="NCBI Taxonomy" id="2787"/>
    <lineage>
        <taxon>Eukaryota</taxon>
        <taxon>Rhodophyta</taxon>
        <taxon>Bangiophyceae</taxon>
        <taxon>Bangiales</taxon>
        <taxon>Bangiaceae</taxon>
        <taxon>Porphyra</taxon>
    </lineage>
</organism>
<comment type="subcellular location">
    <subcellularLocation>
        <location>Plastid</location>
        <location>Chloroplast</location>
    </subcellularLocation>
</comment>
<comment type="similarity">
    <text evidence="2">Belongs to the acetyltransferase family. Ycf52 subfamily.</text>
</comment>
<geneLocation type="chloroplast"/>
<dbReference type="EC" id="2.3.1.-"/>
<dbReference type="EMBL" id="U38804">
    <property type="protein sequence ID" value="AAC08078.1"/>
    <property type="molecule type" value="Genomic_DNA"/>
</dbReference>
<dbReference type="PIR" id="S73113">
    <property type="entry name" value="S73113"/>
</dbReference>
<dbReference type="SMR" id="P51192"/>
<dbReference type="GO" id="GO:0009507">
    <property type="term" value="C:chloroplast"/>
    <property type="evidence" value="ECO:0007669"/>
    <property type="project" value="UniProtKB-SubCell"/>
</dbReference>
<dbReference type="GO" id="GO:0008080">
    <property type="term" value="F:N-acetyltransferase activity"/>
    <property type="evidence" value="ECO:0007669"/>
    <property type="project" value="InterPro"/>
</dbReference>
<dbReference type="CDD" id="cd04301">
    <property type="entry name" value="NAT_SF"/>
    <property type="match status" value="1"/>
</dbReference>
<dbReference type="Gene3D" id="3.40.630.30">
    <property type="match status" value="1"/>
</dbReference>
<dbReference type="InterPro" id="IPR016181">
    <property type="entry name" value="Acyl_CoA_acyltransferase"/>
</dbReference>
<dbReference type="InterPro" id="IPR000182">
    <property type="entry name" value="GNAT_dom"/>
</dbReference>
<dbReference type="InterPro" id="IPR045039">
    <property type="entry name" value="NSI-like"/>
</dbReference>
<dbReference type="PANTHER" id="PTHR43626">
    <property type="entry name" value="ACYL-COA N-ACYLTRANSFERASE"/>
    <property type="match status" value="1"/>
</dbReference>
<dbReference type="PANTHER" id="PTHR43626:SF4">
    <property type="entry name" value="GCN5-RELATED N-ACETYLTRANSFERASE 2, CHLOROPLASTIC"/>
    <property type="match status" value="1"/>
</dbReference>
<dbReference type="Pfam" id="PF00583">
    <property type="entry name" value="Acetyltransf_1"/>
    <property type="match status" value="1"/>
</dbReference>
<dbReference type="SUPFAM" id="SSF55729">
    <property type="entry name" value="Acyl-CoA N-acyltransferases (Nat)"/>
    <property type="match status" value="1"/>
</dbReference>
<dbReference type="PROSITE" id="PS51186">
    <property type="entry name" value="GNAT"/>
    <property type="match status" value="1"/>
</dbReference>
<name>YCF52_PORPU</name>
<accession>P51192</accession>
<evidence type="ECO:0000255" key="1">
    <source>
        <dbReference type="PROSITE-ProRule" id="PRU00532"/>
    </source>
</evidence>
<evidence type="ECO:0000305" key="2"/>